<keyword id="KW-0963">Cytoplasm</keyword>
<keyword id="KW-0369">Histidine metabolism</keyword>
<keyword id="KW-0378">Hydrolase</keyword>
<keyword id="KW-0408">Iron</keyword>
<keyword id="KW-0479">Metal-binding</keyword>
<keyword id="KW-0862">Zinc</keyword>
<protein>
    <recommendedName>
        <fullName evidence="1">Imidazolonepropionase</fullName>
        <ecNumber evidence="1">3.5.2.7</ecNumber>
    </recommendedName>
    <alternativeName>
        <fullName evidence="1">Imidazolone-5-propionate hydrolase</fullName>
    </alternativeName>
</protein>
<comment type="function">
    <text evidence="1">Catalyzes the hydrolytic cleavage of the carbon-nitrogen bond in imidazolone-5-propanoate to yield N-formimidoyl-L-glutamate. It is the third step in the universal histidine degradation pathway.</text>
</comment>
<comment type="catalytic activity">
    <reaction evidence="1">
        <text>4-imidazolone-5-propanoate + H2O = N-formimidoyl-L-glutamate</text>
        <dbReference type="Rhea" id="RHEA:23660"/>
        <dbReference type="ChEBI" id="CHEBI:15377"/>
        <dbReference type="ChEBI" id="CHEBI:58928"/>
        <dbReference type="ChEBI" id="CHEBI:77893"/>
        <dbReference type="EC" id="3.5.2.7"/>
    </reaction>
</comment>
<comment type="cofactor">
    <cofactor evidence="1">
        <name>Zn(2+)</name>
        <dbReference type="ChEBI" id="CHEBI:29105"/>
    </cofactor>
    <cofactor evidence="1">
        <name>Fe(3+)</name>
        <dbReference type="ChEBI" id="CHEBI:29034"/>
    </cofactor>
    <text evidence="1">Binds 1 zinc or iron ion per subunit.</text>
</comment>
<comment type="pathway">
    <text evidence="1">Amino-acid degradation; L-histidine degradation into L-glutamate; N-formimidoyl-L-glutamate from L-histidine: step 3/3.</text>
</comment>
<comment type="subcellular location">
    <subcellularLocation>
        <location evidence="1">Cytoplasm</location>
    </subcellularLocation>
</comment>
<comment type="similarity">
    <text evidence="1">Belongs to the metallo-dependent hydrolases superfamily. HutI family.</text>
</comment>
<dbReference type="EC" id="3.5.2.7" evidence="1"/>
<dbReference type="EMBL" id="AE017194">
    <property type="protein sequence ID" value="AAS42583.1"/>
    <property type="molecule type" value="Genomic_DNA"/>
</dbReference>
<dbReference type="SMR" id="Q733I0"/>
<dbReference type="KEGG" id="bca:BCE_3678"/>
<dbReference type="HOGENOM" id="CLU_041647_0_1_9"/>
<dbReference type="UniPathway" id="UPA00379">
    <property type="reaction ID" value="UER00551"/>
</dbReference>
<dbReference type="Proteomes" id="UP000002527">
    <property type="component" value="Chromosome"/>
</dbReference>
<dbReference type="GO" id="GO:0005737">
    <property type="term" value="C:cytoplasm"/>
    <property type="evidence" value="ECO:0007669"/>
    <property type="project" value="UniProtKB-SubCell"/>
</dbReference>
<dbReference type="GO" id="GO:0050480">
    <property type="term" value="F:imidazolonepropionase activity"/>
    <property type="evidence" value="ECO:0007669"/>
    <property type="project" value="UniProtKB-UniRule"/>
</dbReference>
<dbReference type="GO" id="GO:0005506">
    <property type="term" value="F:iron ion binding"/>
    <property type="evidence" value="ECO:0007669"/>
    <property type="project" value="UniProtKB-UniRule"/>
</dbReference>
<dbReference type="GO" id="GO:0008270">
    <property type="term" value="F:zinc ion binding"/>
    <property type="evidence" value="ECO:0007669"/>
    <property type="project" value="UniProtKB-UniRule"/>
</dbReference>
<dbReference type="GO" id="GO:0019556">
    <property type="term" value="P:L-histidine catabolic process to glutamate and formamide"/>
    <property type="evidence" value="ECO:0007669"/>
    <property type="project" value="UniProtKB-UniPathway"/>
</dbReference>
<dbReference type="GO" id="GO:0019557">
    <property type="term" value="P:L-histidine catabolic process to glutamate and formate"/>
    <property type="evidence" value="ECO:0007669"/>
    <property type="project" value="UniProtKB-UniPathway"/>
</dbReference>
<dbReference type="CDD" id="cd01296">
    <property type="entry name" value="Imidazolone-5PH"/>
    <property type="match status" value="1"/>
</dbReference>
<dbReference type="FunFam" id="3.20.20.140:FF:000007">
    <property type="entry name" value="Imidazolonepropionase"/>
    <property type="match status" value="1"/>
</dbReference>
<dbReference type="Gene3D" id="3.20.20.140">
    <property type="entry name" value="Metal-dependent hydrolases"/>
    <property type="match status" value="1"/>
</dbReference>
<dbReference type="Gene3D" id="2.30.40.10">
    <property type="entry name" value="Urease, subunit C, domain 1"/>
    <property type="match status" value="1"/>
</dbReference>
<dbReference type="HAMAP" id="MF_00372">
    <property type="entry name" value="HutI"/>
    <property type="match status" value="1"/>
</dbReference>
<dbReference type="InterPro" id="IPR006680">
    <property type="entry name" value="Amidohydro-rel"/>
</dbReference>
<dbReference type="InterPro" id="IPR005920">
    <property type="entry name" value="HutI"/>
</dbReference>
<dbReference type="InterPro" id="IPR011059">
    <property type="entry name" value="Metal-dep_hydrolase_composite"/>
</dbReference>
<dbReference type="InterPro" id="IPR032466">
    <property type="entry name" value="Metal_Hydrolase"/>
</dbReference>
<dbReference type="NCBIfam" id="TIGR01224">
    <property type="entry name" value="hutI"/>
    <property type="match status" value="1"/>
</dbReference>
<dbReference type="PANTHER" id="PTHR42752">
    <property type="entry name" value="IMIDAZOLONEPROPIONASE"/>
    <property type="match status" value="1"/>
</dbReference>
<dbReference type="PANTHER" id="PTHR42752:SF1">
    <property type="entry name" value="IMIDAZOLONEPROPIONASE-RELATED"/>
    <property type="match status" value="1"/>
</dbReference>
<dbReference type="Pfam" id="PF01979">
    <property type="entry name" value="Amidohydro_1"/>
    <property type="match status" value="1"/>
</dbReference>
<dbReference type="SUPFAM" id="SSF51338">
    <property type="entry name" value="Composite domain of metallo-dependent hydrolases"/>
    <property type="match status" value="1"/>
</dbReference>
<dbReference type="SUPFAM" id="SSF51556">
    <property type="entry name" value="Metallo-dependent hydrolases"/>
    <property type="match status" value="1"/>
</dbReference>
<proteinExistence type="inferred from homology"/>
<feature type="chain" id="PRO_0000306429" description="Imidazolonepropionase">
    <location>
        <begin position="1"/>
        <end position="423"/>
    </location>
</feature>
<feature type="binding site" evidence="1">
    <location>
        <position position="78"/>
    </location>
    <ligand>
        <name>Fe(3+)</name>
        <dbReference type="ChEBI" id="CHEBI:29034"/>
    </ligand>
</feature>
<feature type="binding site" evidence="1">
    <location>
        <position position="78"/>
    </location>
    <ligand>
        <name>Zn(2+)</name>
        <dbReference type="ChEBI" id="CHEBI:29105"/>
    </ligand>
</feature>
<feature type="binding site" evidence="1">
    <location>
        <position position="80"/>
    </location>
    <ligand>
        <name>Fe(3+)</name>
        <dbReference type="ChEBI" id="CHEBI:29034"/>
    </ligand>
</feature>
<feature type="binding site" evidence="1">
    <location>
        <position position="80"/>
    </location>
    <ligand>
        <name>Zn(2+)</name>
        <dbReference type="ChEBI" id="CHEBI:29105"/>
    </ligand>
</feature>
<feature type="binding site" evidence="1">
    <location>
        <position position="87"/>
    </location>
    <ligand>
        <name>4-imidazolone-5-propanoate</name>
        <dbReference type="ChEBI" id="CHEBI:77893"/>
    </ligand>
</feature>
<feature type="binding site" evidence="1">
    <location>
        <position position="150"/>
    </location>
    <ligand>
        <name>4-imidazolone-5-propanoate</name>
        <dbReference type="ChEBI" id="CHEBI:77893"/>
    </ligand>
</feature>
<feature type="binding site" evidence="1">
    <location>
        <position position="150"/>
    </location>
    <ligand>
        <name>N-formimidoyl-L-glutamate</name>
        <dbReference type="ChEBI" id="CHEBI:58928"/>
    </ligand>
</feature>
<feature type="binding site" evidence="1">
    <location>
        <position position="183"/>
    </location>
    <ligand>
        <name>4-imidazolone-5-propanoate</name>
        <dbReference type="ChEBI" id="CHEBI:77893"/>
    </ligand>
</feature>
<feature type="binding site" evidence="1">
    <location>
        <position position="247"/>
    </location>
    <ligand>
        <name>Fe(3+)</name>
        <dbReference type="ChEBI" id="CHEBI:29034"/>
    </ligand>
</feature>
<feature type="binding site" evidence="1">
    <location>
        <position position="247"/>
    </location>
    <ligand>
        <name>Zn(2+)</name>
        <dbReference type="ChEBI" id="CHEBI:29105"/>
    </ligand>
</feature>
<feature type="binding site" evidence="1">
    <location>
        <position position="250"/>
    </location>
    <ligand>
        <name>4-imidazolone-5-propanoate</name>
        <dbReference type="ChEBI" id="CHEBI:77893"/>
    </ligand>
</feature>
<feature type="binding site" evidence="1">
    <location>
        <position position="322"/>
    </location>
    <ligand>
        <name>Fe(3+)</name>
        <dbReference type="ChEBI" id="CHEBI:29034"/>
    </ligand>
</feature>
<feature type="binding site" evidence="1">
    <location>
        <position position="322"/>
    </location>
    <ligand>
        <name>Zn(2+)</name>
        <dbReference type="ChEBI" id="CHEBI:29105"/>
    </ligand>
</feature>
<feature type="binding site" evidence="1">
    <location>
        <position position="324"/>
    </location>
    <ligand>
        <name>N-formimidoyl-L-glutamate</name>
        <dbReference type="ChEBI" id="CHEBI:58928"/>
    </ligand>
</feature>
<feature type="binding site" evidence="1">
    <location>
        <position position="326"/>
    </location>
    <ligand>
        <name>N-formimidoyl-L-glutamate</name>
        <dbReference type="ChEBI" id="CHEBI:58928"/>
    </ligand>
</feature>
<feature type="binding site" evidence="1">
    <location>
        <position position="327"/>
    </location>
    <ligand>
        <name>4-imidazolone-5-propanoate</name>
        <dbReference type="ChEBI" id="CHEBI:77893"/>
    </ligand>
</feature>
<sequence>MLDTLLINIGQLLTMDQEDGLLRREAMNTLPVIENGAVGIENGVITFVGTAEEAKGLQAKEVIDCGGKMVSPGLVDPHTHLVFGGSRENEIALKLQGVPYLEILEQGGGILSTVNATKQSSKEELVQKAKFHLDRMLSFGVTTVEAKSGYGLDDETEWKQLEATAQLQKEHPIDLVSTFLGAHAVPKEYKGRSKEFLQWMLDLLPEMKEKQLAEFVDIFCETGVFSVEESKEFLLKAKELGFDVKIHADEIDPLGGAEAAAEIGAASADHLVGASDKGIEMLANSNTVATLLPGTTFYLNKESFARGRKMIDEGVAVALATDFNPGSCPTENIQLIMSIAMLKLKMTPEEVWNAVTVNSSYAINRGDVAGKIRVGRKADLVLWDAYNYAYVPYHYGVSHVNTVWKNGNIAYTRGEQSWSTATI</sequence>
<organism>
    <name type="scientific">Bacillus cereus (strain ATCC 10987 / NRS 248)</name>
    <dbReference type="NCBI Taxonomy" id="222523"/>
    <lineage>
        <taxon>Bacteria</taxon>
        <taxon>Bacillati</taxon>
        <taxon>Bacillota</taxon>
        <taxon>Bacilli</taxon>
        <taxon>Bacillales</taxon>
        <taxon>Bacillaceae</taxon>
        <taxon>Bacillus</taxon>
        <taxon>Bacillus cereus group</taxon>
    </lineage>
</organism>
<name>HUTI_BACC1</name>
<gene>
    <name evidence="1" type="primary">hutI</name>
    <name type="ordered locus">BCE_3678</name>
</gene>
<accession>Q733I0</accession>
<evidence type="ECO:0000255" key="1">
    <source>
        <dbReference type="HAMAP-Rule" id="MF_00372"/>
    </source>
</evidence>
<reference key="1">
    <citation type="journal article" date="2004" name="Nucleic Acids Res.">
        <title>The genome sequence of Bacillus cereus ATCC 10987 reveals metabolic adaptations and a large plasmid related to Bacillus anthracis pXO1.</title>
        <authorList>
            <person name="Rasko D.A."/>
            <person name="Ravel J."/>
            <person name="Oekstad O.A."/>
            <person name="Helgason E."/>
            <person name="Cer R.Z."/>
            <person name="Jiang L."/>
            <person name="Shores K.A."/>
            <person name="Fouts D.E."/>
            <person name="Tourasse N.J."/>
            <person name="Angiuoli S.V."/>
            <person name="Kolonay J.F."/>
            <person name="Nelson W.C."/>
            <person name="Kolstoe A.-B."/>
            <person name="Fraser C.M."/>
            <person name="Read T.D."/>
        </authorList>
    </citation>
    <scope>NUCLEOTIDE SEQUENCE [LARGE SCALE GENOMIC DNA]</scope>
    <source>
        <strain>ATCC 10987 / NRS 248</strain>
    </source>
</reference>